<dbReference type="EMBL" id="AK005866">
    <property type="protein sequence ID" value="BAB24286.1"/>
    <property type="molecule type" value="mRNA"/>
</dbReference>
<dbReference type="EMBL" id="AK007176">
    <property type="protein sequence ID" value="BAB24885.1"/>
    <property type="molecule type" value="mRNA"/>
</dbReference>
<dbReference type="EMBL" id="AC154227">
    <property type="status" value="NOT_ANNOTATED_CDS"/>
    <property type="molecule type" value="Genomic_DNA"/>
</dbReference>
<dbReference type="EMBL" id="CT030637">
    <property type="status" value="NOT_ANNOTATED_CDS"/>
    <property type="molecule type" value="Genomic_DNA"/>
</dbReference>
<dbReference type="EMBL" id="BC026534">
    <property type="protein sequence ID" value="AAH26534.1"/>
    <property type="molecule type" value="mRNA"/>
</dbReference>
<dbReference type="CCDS" id="CCDS26996.1"/>
<dbReference type="RefSeq" id="NP_080232.3">
    <property type="nucleotide sequence ID" value="NM_025956.4"/>
</dbReference>
<dbReference type="RefSeq" id="XP_011243458.1">
    <property type="nucleotide sequence ID" value="XM_011245156.4"/>
</dbReference>
<dbReference type="SMR" id="Q9CPZ1"/>
<dbReference type="FunCoup" id="Q9CPZ1">
    <property type="interactions" value="9"/>
</dbReference>
<dbReference type="STRING" id="10090.ENSMUSP00000154726"/>
<dbReference type="iPTMnet" id="Q9CPZ1"/>
<dbReference type="PhosphoSitePlus" id="Q9CPZ1"/>
<dbReference type="PaxDb" id="10090-ENSMUSP00000022398"/>
<dbReference type="ProteomicsDB" id="265301"/>
<dbReference type="Antibodypedia" id="24135">
    <property type="antibodies" value="27 antibodies from 11 providers"/>
</dbReference>
<dbReference type="DNASU" id="67082"/>
<dbReference type="Ensembl" id="ENSMUST00000228936.2">
    <property type="protein sequence ID" value="ENSMUSP00000154726.2"/>
    <property type="gene ID" value="ENSMUSG00000021850.15"/>
</dbReference>
<dbReference type="GeneID" id="67082"/>
<dbReference type="KEGG" id="mmu:67082"/>
<dbReference type="UCSC" id="uc007tke.2">
    <property type="organism name" value="mouse"/>
</dbReference>
<dbReference type="AGR" id="MGI:1914332"/>
<dbReference type="CTD" id="55195"/>
<dbReference type="MGI" id="MGI:1914332">
    <property type="gene designation" value="Ccdc198"/>
</dbReference>
<dbReference type="VEuPathDB" id="HostDB:ENSMUSG00000021850"/>
<dbReference type="eggNOG" id="ENOG502S6NN">
    <property type="taxonomic scope" value="Eukaryota"/>
</dbReference>
<dbReference type="GeneTree" id="ENSGT00390000001071"/>
<dbReference type="InParanoid" id="Q9CPZ1"/>
<dbReference type="OMA" id="QRDHKAK"/>
<dbReference type="OrthoDB" id="67406at9989"/>
<dbReference type="TreeFam" id="TF336148"/>
<dbReference type="BioGRID-ORCS" id="67082">
    <property type="hits" value="4 hits in 76 CRISPR screens"/>
</dbReference>
<dbReference type="PRO" id="PR:Q9CPZ1"/>
<dbReference type="Proteomes" id="UP000000589">
    <property type="component" value="Chromosome 14"/>
</dbReference>
<dbReference type="RNAct" id="Q9CPZ1">
    <property type="molecule type" value="protein"/>
</dbReference>
<dbReference type="Bgee" id="ENSMUSG00000021850">
    <property type="expression patterns" value="Expressed in right kidney and 78 other cell types or tissues"/>
</dbReference>
<dbReference type="ExpressionAtlas" id="Q9CPZ1">
    <property type="expression patterns" value="baseline and differential"/>
</dbReference>
<dbReference type="GO" id="GO:0031410">
    <property type="term" value="C:cytoplasmic vesicle"/>
    <property type="evidence" value="ECO:0000314"/>
    <property type="project" value="UniProtKB"/>
</dbReference>
<dbReference type="GO" id="GO:0005886">
    <property type="term" value="C:plasma membrane"/>
    <property type="evidence" value="ECO:0000314"/>
    <property type="project" value="UniProtKB"/>
</dbReference>
<dbReference type="GO" id="GO:0097009">
    <property type="term" value="P:energy homeostasis"/>
    <property type="evidence" value="ECO:0000315"/>
    <property type="project" value="UniProtKB"/>
</dbReference>
<dbReference type="InterPro" id="IPR029235">
    <property type="entry name" value="FAME"/>
</dbReference>
<dbReference type="PANTHER" id="PTHR16065">
    <property type="entry name" value="COILED-COIL DOMAIN CONTAINING 198"/>
    <property type="match status" value="1"/>
</dbReference>
<dbReference type="PANTHER" id="PTHR16065:SF2">
    <property type="entry name" value="COILED-COIL DOMAIN CONTAINING 198"/>
    <property type="match status" value="1"/>
</dbReference>
<dbReference type="Pfam" id="PF15398">
    <property type="entry name" value="DUF4619"/>
    <property type="match status" value="1"/>
</dbReference>
<gene>
    <name evidence="1" type="primary">Ccdc198</name>
    <name type="synonym">C14orf105</name>
    <name evidence="4" type="synonym">Fame</name>
</gene>
<proteinExistence type="evidence at protein level"/>
<evidence type="ECO:0000250" key="1">
    <source>
        <dbReference type="UniProtKB" id="Q9NVL8"/>
    </source>
</evidence>
<evidence type="ECO:0000256" key="2">
    <source>
        <dbReference type="SAM" id="MobiDB-lite"/>
    </source>
</evidence>
<evidence type="ECO:0000269" key="3">
    <source>
    </source>
</evidence>
<evidence type="ECO:0000303" key="4">
    <source>
    </source>
</evidence>
<evidence type="ECO:0000305" key="5"/>
<evidence type="ECO:0000305" key="6">
    <source>
    </source>
</evidence>
<evidence type="ECO:0000312" key="7">
    <source>
        <dbReference type="MGI" id="MGI:1914332"/>
    </source>
</evidence>
<name>FAME_MOUSE</name>
<organism>
    <name type="scientific">Mus musculus</name>
    <name type="common">Mouse</name>
    <dbReference type="NCBI Taxonomy" id="10090"/>
    <lineage>
        <taxon>Eukaryota</taxon>
        <taxon>Metazoa</taxon>
        <taxon>Chordata</taxon>
        <taxon>Craniata</taxon>
        <taxon>Vertebrata</taxon>
        <taxon>Euteleostomi</taxon>
        <taxon>Mammalia</taxon>
        <taxon>Eutheria</taxon>
        <taxon>Euarchontoglires</taxon>
        <taxon>Glires</taxon>
        <taxon>Rodentia</taxon>
        <taxon>Myomorpha</taxon>
        <taxon>Muroidea</taxon>
        <taxon>Muridae</taxon>
        <taxon>Murinae</taxon>
        <taxon>Mus</taxon>
        <taxon>Mus</taxon>
    </lineage>
</organism>
<protein>
    <recommendedName>
        <fullName>Factor associated with metabolism and energy</fullName>
    </recommendedName>
    <alternativeName>
        <fullName evidence="7">Protein CCDC198</fullName>
    </alternativeName>
</protein>
<feature type="initiator methionine" description="Removed" evidence="6">
    <location>
        <position position="1"/>
    </location>
</feature>
<feature type="chain" id="PRO_0000089914" description="Factor associated with metabolism and energy">
    <location>
        <begin position="2"/>
        <end position="294"/>
    </location>
</feature>
<feature type="region of interest" description="Disordered" evidence="2">
    <location>
        <begin position="1"/>
        <end position="28"/>
    </location>
</feature>
<feature type="region of interest" description="Disordered" evidence="2">
    <location>
        <begin position="255"/>
        <end position="279"/>
    </location>
</feature>
<feature type="compositionally biased region" description="Basic residues" evidence="2">
    <location>
        <begin position="1"/>
        <end position="12"/>
    </location>
</feature>
<feature type="compositionally biased region" description="Polar residues" evidence="2">
    <location>
        <begin position="17"/>
        <end position="28"/>
    </location>
</feature>
<feature type="compositionally biased region" description="Basic and acidic residues" evidence="2">
    <location>
        <begin position="268"/>
        <end position="279"/>
    </location>
</feature>
<feature type="lipid moiety-binding region" description="N-myristoyl glycine" evidence="6">
    <location>
        <position position="2"/>
    </location>
</feature>
<feature type="mutagenesis site" description="Affects the subcellular localization. Detected in the nucleus." evidence="3">
    <original>G</original>
    <variation>A</variation>
    <location>
        <position position="2"/>
    </location>
</feature>
<feature type="sequence conflict" description="In Ref. 3; AAH26534." evidence="5" ref="3">
    <original>T</original>
    <variation>A</variation>
    <location>
        <position position="23"/>
    </location>
</feature>
<feature type="sequence conflict" description="In Ref. 3; AAH26534." evidence="5" ref="3">
    <original>N</original>
    <variation>S</variation>
    <location>
        <position position="52"/>
    </location>
</feature>
<feature type="sequence conflict" description="In Ref. 3; AAH26534." evidence="5" ref="3">
    <original>G</original>
    <variation>S</variation>
    <location>
        <position position="200"/>
    </location>
</feature>
<feature type="sequence conflict" description="In Ref. 3; AAH26534." evidence="5" ref="3">
    <original>D</original>
    <variation>G</variation>
    <location>
        <position position="292"/>
    </location>
</feature>
<keyword id="KW-1003">Cell membrane</keyword>
<keyword id="KW-0968">Cytoplasmic vesicle</keyword>
<keyword id="KW-0449">Lipoprotein</keyword>
<keyword id="KW-0472">Membrane</keyword>
<keyword id="KW-0519">Myristate</keyword>
<keyword id="KW-1185">Reference proteome</keyword>
<comment type="function">
    <text evidence="3">May be involved in tuning the metabolism, energy expenditure, and excretion processes.</text>
</comment>
<comment type="subcellular location">
    <subcellularLocation>
        <location evidence="3">Cell membrane</location>
        <topology evidence="3">Peripheral membrane protein</topology>
    </subcellularLocation>
    <subcellularLocation>
        <location evidence="3">Cytoplasmic vesicle</location>
    </subcellularLocation>
</comment>
<comment type="tissue specificity">
    <text evidence="3">Expressed in proximal tubules of the kidney.</text>
</comment>
<comment type="disruption phenotype">
    <text evidence="3">Deficient mice are viable without major developmental, morphological or behavioral defects. However, body weight and mean lean body mass are significantly altered in knockout mice. Mice display significant decrease in serum ferritin and high amount of albumin in the urine. Pregnant knockout females subjected to iron deficit diet, result in developing embryos with altered sizes of inner organs and interscapular brown adipose tissue.</text>
</comment>
<reference key="1">
    <citation type="journal article" date="2005" name="Science">
        <title>The transcriptional landscape of the mammalian genome.</title>
        <authorList>
            <person name="Carninci P."/>
            <person name="Kasukawa T."/>
            <person name="Katayama S."/>
            <person name="Gough J."/>
            <person name="Frith M.C."/>
            <person name="Maeda N."/>
            <person name="Oyama R."/>
            <person name="Ravasi T."/>
            <person name="Lenhard B."/>
            <person name="Wells C."/>
            <person name="Kodzius R."/>
            <person name="Shimokawa K."/>
            <person name="Bajic V.B."/>
            <person name="Brenner S.E."/>
            <person name="Batalov S."/>
            <person name="Forrest A.R."/>
            <person name="Zavolan M."/>
            <person name="Davis M.J."/>
            <person name="Wilming L.G."/>
            <person name="Aidinis V."/>
            <person name="Allen J.E."/>
            <person name="Ambesi-Impiombato A."/>
            <person name="Apweiler R."/>
            <person name="Aturaliya R.N."/>
            <person name="Bailey T.L."/>
            <person name="Bansal M."/>
            <person name="Baxter L."/>
            <person name="Beisel K.W."/>
            <person name="Bersano T."/>
            <person name="Bono H."/>
            <person name="Chalk A.M."/>
            <person name="Chiu K.P."/>
            <person name="Choudhary V."/>
            <person name="Christoffels A."/>
            <person name="Clutterbuck D.R."/>
            <person name="Crowe M.L."/>
            <person name="Dalla E."/>
            <person name="Dalrymple B.P."/>
            <person name="de Bono B."/>
            <person name="Della Gatta G."/>
            <person name="di Bernardo D."/>
            <person name="Down T."/>
            <person name="Engstrom P."/>
            <person name="Fagiolini M."/>
            <person name="Faulkner G."/>
            <person name="Fletcher C.F."/>
            <person name="Fukushima T."/>
            <person name="Furuno M."/>
            <person name="Futaki S."/>
            <person name="Gariboldi M."/>
            <person name="Georgii-Hemming P."/>
            <person name="Gingeras T.R."/>
            <person name="Gojobori T."/>
            <person name="Green R.E."/>
            <person name="Gustincich S."/>
            <person name="Harbers M."/>
            <person name="Hayashi Y."/>
            <person name="Hensch T.K."/>
            <person name="Hirokawa N."/>
            <person name="Hill D."/>
            <person name="Huminiecki L."/>
            <person name="Iacono M."/>
            <person name="Ikeo K."/>
            <person name="Iwama A."/>
            <person name="Ishikawa T."/>
            <person name="Jakt M."/>
            <person name="Kanapin A."/>
            <person name="Katoh M."/>
            <person name="Kawasawa Y."/>
            <person name="Kelso J."/>
            <person name="Kitamura H."/>
            <person name="Kitano H."/>
            <person name="Kollias G."/>
            <person name="Krishnan S.P."/>
            <person name="Kruger A."/>
            <person name="Kummerfeld S.K."/>
            <person name="Kurochkin I.V."/>
            <person name="Lareau L.F."/>
            <person name="Lazarevic D."/>
            <person name="Lipovich L."/>
            <person name="Liu J."/>
            <person name="Liuni S."/>
            <person name="McWilliam S."/>
            <person name="Madan Babu M."/>
            <person name="Madera M."/>
            <person name="Marchionni L."/>
            <person name="Matsuda H."/>
            <person name="Matsuzawa S."/>
            <person name="Miki H."/>
            <person name="Mignone F."/>
            <person name="Miyake S."/>
            <person name="Morris K."/>
            <person name="Mottagui-Tabar S."/>
            <person name="Mulder N."/>
            <person name="Nakano N."/>
            <person name="Nakauchi H."/>
            <person name="Ng P."/>
            <person name="Nilsson R."/>
            <person name="Nishiguchi S."/>
            <person name="Nishikawa S."/>
            <person name="Nori F."/>
            <person name="Ohara O."/>
            <person name="Okazaki Y."/>
            <person name="Orlando V."/>
            <person name="Pang K.C."/>
            <person name="Pavan W.J."/>
            <person name="Pavesi G."/>
            <person name="Pesole G."/>
            <person name="Petrovsky N."/>
            <person name="Piazza S."/>
            <person name="Reed J."/>
            <person name="Reid J.F."/>
            <person name="Ring B.Z."/>
            <person name="Ringwald M."/>
            <person name="Rost B."/>
            <person name="Ruan Y."/>
            <person name="Salzberg S.L."/>
            <person name="Sandelin A."/>
            <person name="Schneider C."/>
            <person name="Schoenbach C."/>
            <person name="Sekiguchi K."/>
            <person name="Semple C.A."/>
            <person name="Seno S."/>
            <person name="Sessa L."/>
            <person name="Sheng Y."/>
            <person name="Shibata Y."/>
            <person name="Shimada H."/>
            <person name="Shimada K."/>
            <person name="Silva D."/>
            <person name="Sinclair B."/>
            <person name="Sperling S."/>
            <person name="Stupka E."/>
            <person name="Sugiura K."/>
            <person name="Sultana R."/>
            <person name="Takenaka Y."/>
            <person name="Taki K."/>
            <person name="Tammoja K."/>
            <person name="Tan S.L."/>
            <person name="Tang S."/>
            <person name="Taylor M.S."/>
            <person name="Tegner J."/>
            <person name="Teichmann S.A."/>
            <person name="Ueda H.R."/>
            <person name="van Nimwegen E."/>
            <person name="Verardo R."/>
            <person name="Wei C.L."/>
            <person name="Yagi K."/>
            <person name="Yamanishi H."/>
            <person name="Zabarovsky E."/>
            <person name="Zhu S."/>
            <person name="Zimmer A."/>
            <person name="Hide W."/>
            <person name="Bult C."/>
            <person name="Grimmond S.M."/>
            <person name="Teasdale R.D."/>
            <person name="Liu E.T."/>
            <person name="Brusic V."/>
            <person name="Quackenbush J."/>
            <person name="Wahlestedt C."/>
            <person name="Mattick J.S."/>
            <person name="Hume D.A."/>
            <person name="Kai C."/>
            <person name="Sasaki D."/>
            <person name="Tomaru Y."/>
            <person name="Fukuda S."/>
            <person name="Kanamori-Katayama M."/>
            <person name="Suzuki M."/>
            <person name="Aoki J."/>
            <person name="Arakawa T."/>
            <person name="Iida J."/>
            <person name="Imamura K."/>
            <person name="Itoh M."/>
            <person name="Kato T."/>
            <person name="Kawaji H."/>
            <person name="Kawagashira N."/>
            <person name="Kawashima T."/>
            <person name="Kojima M."/>
            <person name="Kondo S."/>
            <person name="Konno H."/>
            <person name="Nakano K."/>
            <person name="Ninomiya N."/>
            <person name="Nishio T."/>
            <person name="Okada M."/>
            <person name="Plessy C."/>
            <person name="Shibata K."/>
            <person name="Shiraki T."/>
            <person name="Suzuki S."/>
            <person name="Tagami M."/>
            <person name="Waki K."/>
            <person name="Watahiki A."/>
            <person name="Okamura-Oho Y."/>
            <person name="Suzuki H."/>
            <person name="Kawai J."/>
            <person name="Hayashizaki Y."/>
        </authorList>
    </citation>
    <scope>NUCLEOTIDE SEQUENCE [LARGE SCALE MRNA]</scope>
    <source>
        <strain>C57BL/6J</strain>
        <tissue>Testis</tissue>
    </source>
</reference>
<reference key="2">
    <citation type="journal article" date="2009" name="PLoS Biol.">
        <title>Lineage-specific biology revealed by a finished genome assembly of the mouse.</title>
        <authorList>
            <person name="Church D.M."/>
            <person name="Goodstadt L."/>
            <person name="Hillier L.W."/>
            <person name="Zody M.C."/>
            <person name="Goldstein S."/>
            <person name="She X."/>
            <person name="Bult C.J."/>
            <person name="Agarwala R."/>
            <person name="Cherry J.L."/>
            <person name="DiCuccio M."/>
            <person name="Hlavina W."/>
            <person name="Kapustin Y."/>
            <person name="Meric P."/>
            <person name="Maglott D."/>
            <person name="Birtle Z."/>
            <person name="Marques A.C."/>
            <person name="Graves T."/>
            <person name="Zhou S."/>
            <person name="Teague B."/>
            <person name="Potamousis K."/>
            <person name="Churas C."/>
            <person name="Place M."/>
            <person name="Herschleb J."/>
            <person name="Runnheim R."/>
            <person name="Forrest D."/>
            <person name="Amos-Landgraf J."/>
            <person name="Schwartz D.C."/>
            <person name="Cheng Z."/>
            <person name="Lindblad-Toh K."/>
            <person name="Eichler E.E."/>
            <person name="Ponting C.P."/>
        </authorList>
    </citation>
    <scope>NUCLEOTIDE SEQUENCE [LARGE SCALE GENOMIC DNA]</scope>
    <source>
        <strain>C57BL/6J</strain>
    </source>
</reference>
<reference key="3">
    <citation type="journal article" date="2004" name="Genome Res.">
        <title>The status, quality, and expansion of the NIH full-length cDNA project: the Mammalian Gene Collection (MGC).</title>
        <authorList>
            <consortium name="The MGC Project Team"/>
        </authorList>
    </citation>
    <scope>NUCLEOTIDE SEQUENCE [LARGE SCALE MRNA]</scope>
    <source>
        <strain>FVB/N</strain>
        <tissue>Kidney</tissue>
    </source>
</reference>
<reference key="4">
    <citation type="journal article" date="2023" name="Nat. Commun.">
        <title>A previously uncharacterized Factor Associated with Metabolism and Energy (FAME/C14orf105/CCDC198/1700011H14Rik) is related to evolutionary adaptation, energy balance, and kidney physiology.</title>
        <authorList>
            <person name="Petersen J."/>
            <person name="Englmaier L."/>
            <person name="Artemov A.V."/>
            <person name="Poverennaya I."/>
            <person name="Mahmoud R."/>
            <person name="Bouderlique T."/>
            <person name="Tesarova M."/>
            <person name="Deviatiiarov R."/>
            <person name="Szilvasy-Szabo A."/>
            <person name="Akkuratov E.E."/>
            <person name="Pajuelo Reguera D."/>
            <person name="Zeberg H."/>
            <person name="Kaucka M."/>
            <person name="Kastriti M.E."/>
            <person name="Krivanek J."/>
            <person name="Radaszkiewicz T."/>
            <person name="Goemoeryova K."/>
            <person name="Knauth S."/>
            <person name="Potesil D."/>
            <person name="Zdrahal Z."/>
            <person name="Ganji R.S."/>
            <person name="Grabowski A."/>
            <person name="Buhl M.E."/>
            <person name="Zikmund T."/>
            <person name="Kavkova M."/>
            <person name="Axelson H."/>
            <person name="Lindgren D."/>
            <person name="Kramann R."/>
            <person name="Kuppe C."/>
            <person name="Erdelyi F."/>
            <person name="Mate Z."/>
            <person name="Szabo G."/>
            <person name="Koehne T."/>
            <person name="Harkany T."/>
            <person name="Fried K."/>
            <person name="Kaiser J."/>
            <person name="Boor P."/>
            <person name="Fekete C."/>
            <person name="Rozman J."/>
            <person name="Kasparek P."/>
            <person name="Prochazka J."/>
            <person name="Sedlacek R."/>
            <person name="Bryja V."/>
            <person name="Gusev O."/>
            <person name="Adameyko I."/>
        </authorList>
    </citation>
    <scope>FUNCTION</scope>
    <scope>TISSUE SPECIFICITY</scope>
    <scope>SUBCELLULAR LOCATION</scope>
    <scope>DISRUPTION PHENOTYPE</scope>
    <scope>MYRISTOYLATION AT GLY-2</scope>
    <scope>MUTAGENESIS OF GLY-2</scope>
</reference>
<sequence length="294" mass="34455">MGLGHSKAHPRVIKVTPLQSQETETPSTGPVFFALNRNLEEESSFTRLQDQNRTREGQLPPLRETWYGRLPAVSRAMYLDIPLKHEETSIIKRHPPRRIQKLEPIDLPQAITSERLLCHQEGRTKSNTKQENEKKIQLPMYTSGKRQYLHKMKMLEMNHKRQEAQMELRKSLLSKAMLDMQKLKDHNGNKIAQSKPRSNGYDILTILPNENINRDPGNPQDEEFLDCHTENDYYVRKIGKMETWLREQEARGQLFWDSSSSDSDELEKDERRPQALVRTKTEKIPLYDDFYDSA</sequence>
<accession>Q9CPZ1</accession>
<accession>A9C481</accession>
<accession>Q8R0Q0</accession>